<comment type="function">
    <text evidence="1">Transcription factor that binds preferentially to the octamer motif (5'-ATGTTAAT-3'). May exert a regulatory function in meiotic events that are required for terminal differentiation of male germ cell (By similarity).</text>
</comment>
<comment type="subcellular location">
    <subcellularLocation>
        <location evidence="2 3">Nucleus</location>
    </subcellularLocation>
</comment>
<comment type="tissue specificity">
    <text evidence="5">In adult brain, expressed in the olfactory bulb, becoming specifically concentrated in the mitral cell layer. Also found in the pyramidal cell layer of the hippocampus, in the granule cell layer of the cerebellum and in the cortex.</text>
</comment>
<comment type="developmental stage">
    <text evidence="5">Low expression levels observed at 12 dpc in neural tube and brain. On days 15.5 and 16.5, expression levels increased and became localized specifically to the forebrain, with highest levels found in the laminar region of the forebrain cortex. Also expressed in the mitral region of the olfactory bulb.</text>
</comment>
<comment type="similarity">
    <text evidence="6">Belongs to the POU transcription factor family. Class-5 subfamily.</text>
</comment>
<sequence>MAGRRSSNVFPLSGNSGGGLEVDTPTWLSSQAATSRLMVRPSMGPGICPGPEVWGVPLGSSPYEFRGGIAPYRACEARAWSQSSSEDTCPGPYIALRYMPNLALPEDVSAIQKEMEQLAKELRQKRMTLGYSQADVGFAVGAMFGKVLSQTTICRFEAQQLSLANMWKLRPLLKMWLEEVDEKNLLGICRMEMILEQARKRRRASRERRIGSNLEKLFLQCPEPTPQQISYIAGRLRLQKDLVQVWFSNRSQMGSWPTNDTSRREDVGATGSPFPGPPVCFPMAPGLHFDFTHYEGSCLTPLYSSTPFPVRGALLSAPTTTLGLPRLSS</sequence>
<reference key="1">
    <citation type="journal article" date="2005" name="Science">
        <title>The transcriptional landscape of the mammalian genome.</title>
        <authorList>
            <person name="Carninci P."/>
            <person name="Kasukawa T."/>
            <person name="Katayama S."/>
            <person name="Gough J."/>
            <person name="Frith M.C."/>
            <person name="Maeda N."/>
            <person name="Oyama R."/>
            <person name="Ravasi T."/>
            <person name="Lenhard B."/>
            <person name="Wells C."/>
            <person name="Kodzius R."/>
            <person name="Shimokawa K."/>
            <person name="Bajic V.B."/>
            <person name="Brenner S.E."/>
            <person name="Batalov S."/>
            <person name="Forrest A.R."/>
            <person name="Zavolan M."/>
            <person name="Davis M.J."/>
            <person name="Wilming L.G."/>
            <person name="Aidinis V."/>
            <person name="Allen J.E."/>
            <person name="Ambesi-Impiombato A."/>
            <person name="Apweiler R."/>
            <person name="Aturaliya R.N."/>
            <person name="Bailey T.L."/>
            <person name="Bansal M."/>
            <person name="Baxter L."/>
            <person name="Beisel K.W."/>
            <person name="Bersano T."/>
            <person name="Bono H."/>
            <person name="Chalk A.M."/>
            <person name="Chiu K.P."/>
            <person name="Choudhary V."/>
            <person name="Christoffels A."/>
            <person name="Clutterbuck D.R."/>
            <person name="Crowe M.L."/>
            <person name="Dalla E."/>
            <person name="Dalrymple B.P."/>
            <person name="de Bono B."/>
            <person name="Della Gatta G."/>
            <person name="di Bernardo D."/>
            <person name="Down T."/>
            <person name="Engstrom P."/>
            <person name="Fagiolini M."/>
            <person name="Faulkner G."/>
            <person name="Fletcher C.F."/>
            <person name="Fukushima T."/>
            <person name="Furuno M."/>
            <person name="Futaki S."/>
            <person name="Gariboldi M."/>
            <person name="Georgii-Hemming P."/>
            <person name="Gingeras T.R."/>
            <person name="Gojobori T."/>
            <person name="Green R.E."/>
            <person name="Gustincich S."/>
            <person name="Harbers M."/>
            <person name="Hayashi Y."/>
            <person name="Hensch T.K."/>
            <person name="Hirokawa N."/>
            <person name="Hill D."/>
            <person name="Huminiecki L."/>
            <person name="Iacono M."/>
            <person name="Ikeo K."/>
            <person name="Iwama A."/>
            <person name="Ishikawa T."/>
            <person name="Jakt M."/>
            <person name="Kanapin A."/>
            <person name="Katoh M."/>
            <person name="Kawasawa Y."/>
            <person name="Kelso J."/>
            <person name="Kitamura H."/>
            <person name="Kitano H."/>
            <person name="Kollias G."/>
            <person name="Krishnan S.P."/>
            <person name="Kruger A."/>
            <person name="Kummerfeld S.K."/>
            <person name="Kurochkin I.V."/>
            <person name="Lareau L.F."/>
            <person name="Lazarevic D."/>
            <person name="Lipovich L."/>
            <person name="Liu J."/>
            <person name="Liuni S."/>
            <person name="McWilliam S."/>
            <person name="Madan Babu M."/>
            <person name="Madera M."/>
            <person name="Marchionni L."/>
            <person name="Matsuda H."/>
            <person name="Matsuzawa S."/>
            <person name="Miki H."/>
            <person name="Mignone F."/>
            <person name="Miyake S."/>
            <person name="Morris K."/>
            <person name="Mottagui-Tabar S."/>
            <person name="Mulder N."/>
            <person name="Nakano N."/>
            <person name="Nakauchi H."/>
            <person name="Ng P."/>
            <person name="Nilsson R."/>
            <person name="Nishiguchi S."/>
            <person name="Nishikawa S."/>
            <person name="Nori F."/>
            <person name="Ohara O."/>
            <person name="Okazaki Y."/>
            <person name="Orlando V."/>
            <person name="Pang K.C."/>
            <person name="Pavan W.J."/>
            <person name="Pavesi G."/>
            <person name="Pesole G."/>
            <person name="Petrovsky N."/>
            <person name="Piazza S."/>
            <person name="Reed J."/>
            <person name="Reid J.F."/>
            <person name="Ring B.Z."/>
            <person name="Ringwald M."/>
            <person name="Rost B."/>
            <person name="Ruan Y."/>
            <person name="Salzberg S.L."/>
            <person name="Sandelin A."/>
            <person name="Schneider C."/>
            <person name="Schoenbach C."/>
            <person name="Sekiguchi K."/>
            <person name="Semple C.A."/>
            <person name="Seno S."/>
            <person name="Sessa L."/>
            <person name="Sheng Y."/>
            <person name="Shibata Y."/>
            <person name="Shimada H."/>
            <person name="Shimada K."/>
            <person name="Silva D."/>
            <person name="Sinclair B."/>
            <person name="Sperling S."/>
            <person name="Stupka E."/>
            <person name="Sugiura K."/>
            <person name="Sultana R."/>
            <person name="Takenaka Y."/>
            <person name="Taki K."/>
            <person name="Tammoja K."/>
            <person name="Tan S.L."/>
            <person name="Tang S."/>
            <person name="Taylor M.S."/>
            <person name="Tegner J."/>
            <person name="Teichmann S.A."/>
            <person name="Ueda H.R."/>
            <person name="van Nimwegen E."/>
            <person name="Verardo R."/>
            <person name="Wei C.L."/>
            <person name="Yagi K."/>
            <person name="Yamanishi H."/>
            <person name="Zabarovsky E."/>
            <person name="Zhu S."/>
            <person name="Zimmer A."/>
            <person name="Hide W."/>
            <person name="Bult C."/>
            <person name="Grimmond S.M."/>
            <person name="Teasdale R.D."/>
            <person name="Liu E.T."/>
            <person name="Brusic V."/>
            <person name="Quackenbush J."/>
            <person name="Wahlestedt C."/>
            <person name="Mattick J.S."/>
            <person name="Hume D.A."/>
            <person name="Kai C."/>
            <person name="Sasaki D."/>
            <person name="Tomaru Y."/>
            <person name="Fukuda S."/>
            <person name="Kanamori-Katayama M."/>
            <person name="Suzuki M."/>
            <person name="Aoki J."/>
            <person name="Arakawa T."/>
            <person name="Iida J."/>
            <person name="Imamura K."/>
            <person name="Itoh M."/>
            <person name="Kato T."/>
            <person name="Kawaji H."/>
            <person name="Kawagashira N."/>
            <person name="Kawashima T."/>
            <person name="Kojima M."/>
            <person name="Kondo S."/>
            <person name="Konno H."/>
            <person name="Nakano K."/>
            <person name="Ninomiya N."/>
            <person name="Nishio T."/>
            <person name="Okada M."/>
            <person name="Plessy C."/>
            <person name="Shibata K."/>
            <person name="Shiraki T."/>
            <person name="Suzuki S."/>
            <person name="Tagami M."/>
            <person name="Waki K."/>
            <person name="Watahiki A."/>
            <person name="Okamura-Oho Y."/>
            <person name="Suzuki H."/>
            <person name="Kawai J."/>
            <person name="Hayashizaki Y."/>
        </authorList>
    </citation>
    <scope>NUCLEOTIDE SEQUENCE [LARGE SCALE MRNA]</scope>
    <source>
        <strain>C57BL/6J</strain>
        <tissue>Testis</tissue>
    </source>
</reference>
<reference key="2">
    <citation type="journal article" date="1994" name="Eur. J. Biochem.">
        <title>A human POU domain gene, mPOU, is expressed in developing brain and specific adult tissues.</title>
        <authorList>
            <person name="Wey E."/>
            <person name="Lyons G.E."/>
            <person name="Schaefer B.W."/>
        </authorList>
    </citation>
    <scope>TISSUE SPECIFICITY</scope>
    <scope>DEVELOPMENTAL STAGE</scope>
</reference>
<feature type="chain" id="PRO_0000100757" description="POU domain, class 5, transcription factor 2">
    <location>
        <begin position="1"/>
        <end position="329"/>
    </location>
</feature>
<feature type="domain" description="POU-specific" evidence="3">
    <location>
        <begin position="107"/>
        <end position="181"/>
    </location>
</feature>
<feature type="DNA-binding region" description="Homeobox" evidence="2">
    <location>
        <begin position="199"/>
        <end position="258"/>
    </location>
</feature>
<feature type="region of interest" description="Disordered" evidence="4">
    <location>
        <begin position="1"/>
        <end position="24"/>
    </location>
</feature>
<feature type="compositionally biased region" description="Polar residues" evidence="4">
    <location>
        <begin position="1"/>
        <end position="14"/>
    </location>
</feature>
<feature type="sequence conflict" description="In Ref. 1; BAC36466." evidence="6" ref="1">
    <original>T</original>
    <variation>P</variation>
    <location>
        <position position="292"/>
    </location>
</feature>
<protein>
    <recommendedName>
        <fullName>POU domain, class 5, transcription factor 2</fullName>
    </recommendedName>
    <alternativeName>
        <fullName>Sperm 1 POU domain transcription factor</fullName>
        <shortName>SPRM-1</shortName>
    </alternativeName>
</protein>
<dbReference type="EMBL" id="AK005948">
    <property type="protein sequence ID" value="BAB24332.1"/>
    <property type="molecule type" value="mRNA"/>
</dbReference>
<dbReference type="EMBL" id="AK076753">
    <property type="protein sequence ID" value="BAC36466.1"/>
    <property type="molecule type" value="mRNA"/>
</dbReference>
<dbReference type="CCDS" id="CCDS56895.1"/>
<dbReference type="RefSeq" id="NP_083591.1">
    <property type="nucleotide sequence ID" value="NM_029315.1"/>
</dbReference>
<dbReference type="SMR" id="Q9DAC9"/>
<dbReference type="FunCoup" id="Q9DAC9">
    <property type="interactions" value="4"/>
</dbReference>
<dbReference type="STRING" id="10090.ENSMUSP00000135597"/>
<dbReference type="GlyGen" id="Q9DAC9">
    <property type="glycosylation" value="1 site"/>
</dbReference>
<dbReference type="PhosphoSitePlus" id="Q9DAC9"/>
<dbReference type="PaxDb" id="10090-ENSMUSP00000135597"/>
<dbReference type="ProteomicsDB" id="289650"/>
<dbReference type="GeneID" id="75507"/>
<dbReference type="KEGG" id="mmu:75507"/>
<dbReference type="UCSC" id="uc011zcd.1">
    <property type="organism name" value="mouse"/>
</dbReference>
<dbReference type="AGR" id="MGI:1922757"/>
<dbReference type="CTD" id="134187"/>
<dbReference type="MGI" id="MGI:1922757">
    <property type="gene designation" value="Pou5f2"/>
</dbReference>
<dbReference type="eggNOG" id="KOG3802">
    <property type="taxonomic scope" value="Eukaryota"/>
</dbReference>
<dbReference type="InParanoid" id="Q9DAC9"/>
<dbReference type="OrthoDB" id="9561544at2759"/>
<dbReference type="PhylomeDB" id="Q9DAC9"/>
<dbReference type="TreeFam" id="TF316413"/>
<dbReference type="BioGRID-ORCS" id="75507">
    <property type="hits" value="0 hits in 75 CRISPR screens"/>
</dbReference>
<dbReference type="PRO" id="PR:Q9DAC9"/>
<dbReference type="Proteomes" id="UP000000589">
    <property type="component" value="Unplaced"/>
</dbReference>
<dbReference type="RNAct" id="Q9DAC9">
    <property type="molecule type" value="protein"/>
</dbReference>
<dbReference type="GO" id="GO:0005634">
    <property type="term" value="C:nucleus"/>
    <property type="evidence" value="ECO:0007669"/>
    <property type="project" value="UniProtKB-SubCell"/>
</dbReference>
<dbReference type="GO" id="GO:0003700">
    <property type="term" value="F:DNA-binding transcription factor activity"/>
    <property type="evidence" value="ECO:0007669"/>
    <property type="project" value="InterPro"/>
</dbReference>
<dbReference type="GO" id="GO:0043565">
    <property type="term" value="F:sequence-specific DNA binding"/>
    <property type="evidence" value="ECO:0000314"/>
    <property type="project" value="MGI"/>
</dbReference>
<dbReference type="CDD" id="cd00086">
    <property type="entry name" value="homeodomain"/>
    <property type="match status" value="1"/>
</dbReference>
<dbReference type="FunFam" id="1.10.260.40:FF:000054">
    <property type="entry name" value="POU domain protein"/>
    <property type="match status" value="1"/>
</dbReference>
<dbReference type="Gene3D" id="1.10.10.60">
    <property type="entry name" value="Homeodomain-like"/>
    <property type="match status" value="1"/>
</dbReference>
<dbReference type="Gene3D" id="1.10.260.40">
    <property type="entry name" value="lambda repressor-like DNA-binding domains"/>
    <property type="match status" value="1"/>
</dbReference>
<dbReference type="InterPro" id="IPR001356">
    <property type="entry name" value="HD"/>
</dbReference>
<dbReference type="InterPro" id="IPR009057">
    <property type="entry name" value="Homeodomain-like_sf"/>
</dbReference>
<dbReference type="InterPro" id="IPR010982">
    <property type="entry name" value="Lambda_DNA-bd_dom_sf"/>
</dbReference>
<dbReference type="InterPro" id="IPR013847">
    <property type="entry name" value="POU"/>
</dbReference>
<dbReference type="InterPro" id="IPR000327">
    <property type="entry name" value="POU_dom"/>
</dbReference>
<dbReference type="InterPro" id="IPR050255">
    <property type="entry name" value="POU_domain_TF"/>
</dbReference>
<dbReference type="PANTHER" id="PTHR11636">
    <property type="entry name" value="POU DOMAIN"/>
    <property type="match status" value="1"/>
</dbReference>
<dbReference type="PANTHER" id="PTHR11636:SF14">
    <property type="entry name" value="POU DOMAIN, CLASS 5, TRANSCRIPTION FACTOR 2"/>
    <property type="match status" value="1"/>
</dbReference>
<dbReference type="Pfam" id="PF00046">
    <property type="entry name" value="Homeodomain"/>
    <property type="match status" value="1"/>
</dbReference>
<dbReference type="Pfam" id="PF00157">
    <property type="entry name" value="Pou"/>
    <property type="match status" value="1"/>
</dbReference>
<dbReference type="PRINTS" id="PR00028">
    <property type="entry name" value="POUDOMAIN"/>
</dbReference>
<dbReference type="SMART" id="SM00389">
    <property type="entry name" value="HOX"/>
    <property type="match status" value="1"/>
</dbReference>
<dbReference type="SMART" id="SM00352">
    <property type="entry name" value="POU"/>
    <property type="match status" value="1"/>
</dbReference>
<dbReference type="SUPFAM" id="SSF46689">
    <property type="entry name" value="Homeodomain-like"/>
    <property type="match status" value="1"/>
</dbReference>
<dbReference type="SUPFAM" id="SSF47413">
    <property type="entry name" value="lambda repressor-like DNA-binding domains"/>
    <property type="match status" value="1"/>
</dbReference>
<dbReference type="PROSITE" id="PS50071">
    <property type="entry name" value="HOMEOBOX_2"/>
    <property type="match status" value="1"/>
</dbReference>
<dbReference type="PROSITE" id="PS00035">
    <property type="entry name" value="POU_1"/>
    <property type="match status" value="1"/>
</dbReference>
<dbReference type="PROSITE" id="PS00465">
    <property type="entry name" value="POU_2"/>
    <property type="match status" value="1"/>
</dbReference>
<dbReference type="PROSITE" id="PS51179">
    <property type="entry name" value="POU_3"/>
    <property type="match status" value="1"/>
</dbReference>
<gene>
    <name type="primary">Pou5f2</name>
    <name type="synonym">Sprm1</name>
</gene>
<proteinExistence type="evidence at transcript level"/>
<accession>Q9DAC9</accession>
<accession>Q8BVS2</accession>
<name>PO5F2_MOUSE</name>
<keyword id="KW-0238">DNA-binding</keyword>
<keyword id="KW-0371">Homeobox</keyword>
<keyword id="KW-0539">Nucleus</keyword>
<keyword id="KW-1185">Reference proteome</keyword>
<keyword id="KW-0804">Transcription</keyword>
<keyword id="KW-0805">Transcription regulation</keyword>
<evidence type="ECO:0000250" key="1"/>
<evidence type="ECO:0000255" key="2">
    <source>
        <dbReference type="PROSITE-ProRule" id="PRU00108"/>
    </source>
</evidence>
<evidence type="ECO:0000255" key="3">
    <source>
        <dbReference type="PROSITE-ProRule" id="PRU00530"/>
    </source>
</evidence>
<evidence type="ECO:0000256" key="4">
    <source>
        <dbReference type="SAM" id="MobiDB-lite"/>
    </source>
</evidence>
<evidence type="ECO:0000269" key="5">
    <source>
    </source>
</evidence>
<evidence type="ECO:0000305" key="6"/>
<organism>
    <name type="scientific">Mus musculus</name>
    <name type="common">Mouse</name>
    <dbReference type="NCBI Taxonomy" id="10090"/>
    <lineage>
        <taxon>Eukaryota</taxon>
        <taxon>Metazoa</taxon>
        <taxon>Chordata</taxon>
        <taxon>Craniata</taxon>
        <taxon>Vertebrata</taxon>
        <taxon>Euteleostomi</taxon>
        <taxon>Mammalia</taxon>
        <taxon>Eutheria</taxon>
        <taxon>Euarchontoglires</taxon>
        <taxon>Glires</taxon>
        <taxon>Rodentia</taxon>
        <taxon>Myomorpha</taxon>
        <taxon>Muroidea</taxon>
        <taxon>Muridae</taxon>
        <taxon>Murinae</taxon>
        <taxon>Mus</taxon>
        <taxon>Mus</taxon>
    </lineage>
</organism>